<organism>
    <name type="scientific">Synechococcus sp. (strain JA-2-3B'a(2-13))</name>
    <name type="common">Cyanobacteria bacterium Yellowstone B-Prime</name>
    <dbReference type="NCBI Taxonomy" id="321332"/>
    <lineage>
        <taxon>Bacteria</taxon>
        <taxon>Bacillati</taxon>
        <taxon>Cyanobacteriota</taxon>
        <taxon>Cyanophyceae</taxon>
        <taxon>Synechococcales</taxon>
        <taxon>Synechococcaceae</taxon>
        <taxon>Synechococcus</taxon>
    </lineage>
</organism>
<protein>
    <recommendedName>
        <fullName evidence="1">Large ribosomal subunit protein uL16</fullName>
    </recommendedName>
    <alternativeName>
        <fullName evidence="3">50S ribosomal protein L16</fullName>
    </alternativeName>
</protein>
<comment type="function">
    <text evidence="1">Binds 23S rRNA and is also seen to make contacts with the A and possibly P site tRNAs.</text>
</comment>
<comment type="subunit">
    <text evidence="1">Part of the 50S ribosomal subunit.</text>
</comment>
<comment type="similarity">
    <text evidence="1">Belongs to the universal ribosomal protein uL16 family.</text>
</comment>
<keyword id="KW-1185">Reference proteome</keyword>
<keyword id="KW-0687">Ribonucleoprotein</keyword>
<keyword id="KW-0689">Ribosomal protein</keyword>
<keyword id="KW-0694">RNA-binding</keyword>
<keyword id="KW-0699">rRNA-binding</keyword>
<keyword id="KW-0820">tRNA-binding</keyword>
<name>RL16_SYNJB</name>
<proteinExistence type="inferred from homology"/>
<feature type="chain" id="PRO_0000251683" description="Large ribosomal subunit protein uL16">
    <location>
        <begin position="1"/>
        <end position="155"/>
    </location>
</feature>
<feature type="region of interest" description="Disordered" evidence="2">
    <location>
        <begin position="1"/>
        <end position="22"/>
    </location>
</feature>
<gene>
    <name evidence="1" type="primary">rplP</name>
    <name evidence="1" type="synonym">rpl16</name>
    <name type="ordered locus">CYB_2604</name>
</gene>
<accession>Q2JIM0</accession>
<dbReference type="EMBL" id="CP000240">
    <property type="protein sequence ID" value="ABD03534.1"/>
    <property type="molecule type" value="Genomic_DNA"/>
</dbReference>
<dbReference type="RefSeq" id="WP_011434159.1">
    <property type="nucleotide sequence ID" value="NC_007776.1"/>
</dbReference>
<dbReference type="SMR" id="Q2JIM0"/>
<dbReference type="STRING" id="321332.CYB_2604"/>
<dbReference type="KEGG" id="cyb:CYB_2604"/>
<dbReference type="eggNOG" id="COG0197">
    <property type="taxonomic scope" value="Bacteria"/>
</dbReference>
<dbReference type="HOGENOM" id="CLU_078858_2_1_3"/>
<dbReference type="OrthoDB" id="9802589at2"/>
<dbReference type="Proteomes" id="UP000001938">
    <property type="component" value="Chromosome"/>
</dbReference>
<dbReference type="GO" id="GO:0022625">
    <property type="term" value="C:cytosolic large ribosomal subunit"/>
    <property type="evidence" value="ECO:0007669"/>
    <property type="project" value="TreeGrafter"/>
</dbReference>
<dbReference type="GO" id="GO:0019843">
    <property type="term" value="F:rRNA binding"/>
    <property type="evidence" value="ECO:0007669"/>
    <property type="project" value="UniProtKB-UniRule"/>
</dbReference>
<dbReference type="GO" id="GO:0003735">
    <property type="term" value="F:structural constituent of ribosome"/>
    <property type="evidence" value="ECO:0007669"/>
    <property type="project" value="InterPro"/>
</dbReference>
<dbReference type="GO" id="GO:0000049">
    <property type="term" value="F:tRNA binding"/>
    <property type="evidence" value="ECO:0007669"/>
    <property type="project" value="UniProtKB-KW"/>
</dbReference>
<dbReference type="GO" id="GO:0006412">
    <property type="term" value="P:translation"/>
    <property type="evidence" value="ECO:0007669"/>
    <property type="project" value="UniProtKB-UniRule"/>
</dbReference>
<dbReference type="CDD" id="cd01433">
    <property type="entry name" value="Ribosomal_L16_L10e"/>
    <property type="match status" value="1"/>
</dbReference>
<dbReference type="FunFam" id="3.90.1170.10:FF:000001">
    <property type="entry name" value="50S ribosomal protein L16"/>
    <property type="match status" value="1"/>
</dbReference>
<dbReference type="Gene3D" id="3.90.1170.10">
    <property type="entry name" value="Ribosomal protein L10e/L16"/>
    <property type="match status" value="1"/>
</dbReference>
<dbReference type="HAMAP" id="MF_01342">
    <property type="entry name" value="Ribosomal_uL16"/>
    <property type="match status" value="1"/>
</dbReference>
<dbReference type="InterPro" id="IPR047873">
    <property type="entry name" value="Ribosomal_uL16"/>
</dbReference>
<dbReference type="InterPro" id="IPR000114">
    <property type="entry name" value="Ribosomal_uL16_bact-type"/>
</dbReference>
<dbReference type="InterPro" id="IPR020798">
    <property type="entry name" value="Ribosomal_uL16_CS"/>
</dbReference>
<dbReference type="InterPro" id="IPR016180">
    <property type="entry name" value="Ribosomal_uL16_dom"/>
</dbReference>
<dbReference type="InterPro" id="IPR036920">
    <property type="entry name" value="Ribosomal_uL16_sf"/>
</dbReference>
<dbReference type="NCBIfam" id="TIGR01164">
    <property type="entry name" value="rplP_bact"/>
    <property type="match status" value="1"/>
</dbReference>
<dbReference type="PANTHER" id="PTHR12220">
    <property type="entry name" value="50S/60S RIBOSOMAL PROTEIN L16"/>
    <property type="match status" value="1"/>
</dbReference>
<dbReference type="PANTHER" id="PTHR12220:SF13">
    <property type="entry name" value="LARGE RIBOSOMAL SUBUNIT PROTEIN UL16M"/>
    <property type="match status" value="1"/>
</dbReference>
<dbReference type="Pfam" id="PF00252">
    <property type="entry name" value="Ribosomal_L16"/>
    <property type="match status" value="1"/>
</dbReference>
<dbReference type="PRINTS" id="PR00060">
    <property type="entry name" value="RIBOSOMALL16"/>
</dbReference>
<dbReference type="SUPFAM" id="SSF54686">
    <property type="entry name" value="Ribosomal protein L16p/L10e"/>
    <property type="match status" value="1"/>
</dbReference>
<dbReference type="PROSITE" id="PS00586">
    <property type="entry name" value="RIBOSOMAL_L16_1"/>
    <property type="match status" value="1"/>
</dbReference>
<dbReference type="PROSITE" id="PS00701">
    <property type="entry name" value="RIBOSOMAL_L16_2"/>
    <property type="match status" value="1"/>
</dbReference>
<evidence type="ECO:0000255" key="1">
    <source>
        <dbReference type="HAMAP-Rule" id="MF_01342"/>
    </source>
</evidence>
<evidence type="ECO:0000256" key="2">
    <source>
        <dbReference type="SAM" id="MobiDB-lite"/>
    </source>
</evidence>
<evidence type="ECO:0000305" key="3"/>
<sequence length="155" mass="17435">MLSPKRTKYRKQQRGRMKGKATRGNRINFGEYGLVALEPAWITARQIEASRRAMTRYVRRGGQIWIRIFPDKPVTQRAAETRMGSGKGNPEYWVCVVKPGRILFEMGGVAEPIAREAMRLAAQKLPIKVKFVTKADFEKPEPAQATASEVATSSV</sequence>
<reference key="1">
    <citation type="journal article" date="2007" name="ISME J.">
        <title>Population level functional diversity in a microbial community revealed by comparative genomic and metagenomic analyses.</title>
        <authorList>
            <person name="Bhaya D."/>
            <person name="Grossman A.R."/>
            <person name="Steunou A.-S."/>
            <person name="Khuri N."/>
            <person name="Cohan F.M."/>
            <person name="Hamamura N."/>
            <person name="Melendrez M.C."/>
            <person name="Bateson M.M."/>
            <person name="Ward D.M."/>
            <person name="Heidelberg J.F."/>
        </authorList>
    </citation>
    <scope>NUCLEOTIDE SEQUENCE [LARGE SCALE GENOMIC DNA]</scope>
    <source>
        <strain>JA-2-3B'a(2-13)</strain>
    </source>
</reference>